<feature type="chain" id="PRO_0000150223" description="Phosphoserine aminotransferase">
    <location>
        <begin position="1"/>
        <end position="362"/>
    </location>
</feature>
<feature type="binding site" evidence="1">
    <location>
        <position position="42"/>
    </location>
    <ligand>
        <name>L-glutamate</name>
        <dbReference type="ChEBI" id="CHEBI:29985"/>
    </ligand>
</feature>
<feature type="binding site" evidence="1">
    <location>
        <begin position="76"/>
        <end position="77"/>
    </location>
    <ligand>
        <name>pyridoxal 5'-phosphate</name>
        <dbReference type="ChEBI" id="CHEBI:597326"/>
    </ligand>
</feature>
<feature type="binding site" evidence="1">
    <location>
        <position position="102"/>
    </location>
    <ligand>
        <name>pyridoxal 5'-phosphate</name>
        <dbReference type="ChEBI" id="CHEBI:597326"/>
    </ligand>
</feature>
<feature type="binding site" evidence="1">
    <location>
        <position position="153"/>
    </location>
    <ligand>
        <name>pyridoxal 5'-phosphate</name>
        <dbReference type="ChEBI" id="CHEBI:597326"/>
    </ligand>
</feature>
<feature type="binding site" evidence="1">
    <location>
        <position position="174"/>
    </location>
    <ligand>
        <name>pyridoxal 5'-phosphate</name>
        <dbReference type="ChEBI" id="CHEBI:597326"/>
    </ligand>
</feature>
<feature type="binding site" evidence="1">
    <location>
        <position position="197"/>
    </location>
    <ligand>
        <name>pyridoxal 5'-phosphate</name>
        <dbReference type="ChEBI" id="CHEBI:597326"/>
    </ligand>
</feature>
<feature type="binding site" evidence="1">
    <location>
        <begin position="239"/>
        <end position="240"/>
    </location>
    <ligand>
        <name>pyridoxal 5'-phosphate</name>
        <dbReference type="ChEBI" id="CHEBI:597326"/>
    </ligand>
</feature>
<feature type="modified residue" description="N6-(pyridoxal phosphate)lysine" evidence="1">
    <location>
        <position position="198"/>
    </location>
</feature>
<reference key="1">
    <citation type="journal article" date="2002" name="Mol. Microbiol.">
        <title>Identification of Xenorhabdus nematophila genes required for mutualistic colonization of Steinernema carpocapsae nematodes.</title>
        <authorList>
            <person name="Heungens K."/>
            <person name="Cowles C.E."/>
            <person name="Goodrich-Blair H."/>
        </authorList>
    </citation>
    <scope>NUCLEOTIDE SEQUENCE [GENOMIC DNA]</scope>
</reference>
<reference key="2">
    <citation type="journal article" date="2011" name="PLoS ONE">
        <title>The entomopathogenic bacterial endosymbionts xenorhabdus and photorhabdus: convergent lifestyles from divergent genomes.</title>
        <authorList>
            <person name="Chaston J.M."/>
            <person name="Suen G."/>
            <person name="Tucker S.L."/>
            <person name="Andersen A.W."/>
            <person name="Bhasin A."/>
            <person name="Bode E."/>
            <person name="Bode H.B."/>
            <person name="Brachmann A.O."/>
            <person name="Cowles C.E."/>
            <person name="Cowles K.N."/>
            <person name="Darby C."/>
            <person name="de Leon L."/>
            <person name="Drace K."/>
            <person name="Du Z."/>
            <person name="Givaudan A."/>
            <person name="Herbert Tran E.E."/>
            <person name="Jewell K.A."/>
            <person name="Knack J.J."/>
            <person name="Krasomil-Osterfeld K.C."/>
            <person name="Kukor R."/>
            <person name="Lanois A."/>
            <person name="Latreille P."/>
            <person name="Leimgruber N.K."/>
            <person name="Lipke C.M."/>
            <person name="Liu R."/>
            <person name="Lu X."/>
            <person name="Martens E.C."/>
            <person name="Marri P.R."/>
            <person name="Medigue C."/>
            <person name="Menard M.L."/>
            <person name="Miller N.M."/>
            <person name="Morales-Soto N."/>
            <person name="Norton S."/>
            <person name="Ogier J.C."/>
            <person name="Orchard S.S."/>
            <person name="Park D."/>
            <person name="Park Y."/>
            <person name="Qurollo B.A."/>
            <person name="Sugar D.R."/>
            <person name="Richards G.R."/>
            <person name="Rouy Z."/>
            <person name="Slominski B."/>
            <person name="Slominski K."/>
            <person name="Snyder H."/>
            <person name="Tjaden B.C."/>
            <person name="van der Hoeven R."/>
            <person name="Welch R.D."/>
            <person name="Wheeler C."/>
            <person name="Xiang B."/>
            <person name="Barbazuk B."/>
            <person name="Gaudriault S."/>
            <person name="Goodner B."/>
            <person name="Slater S.C."/>
            <person name="Forst S."/>
            <person name="Goldman B.S."/>
            <person name="Goodrich-Blair H."/>
        </authorList>
    </citation>
    <scope>NUCLEOTIDE SEQUENCE [LARGE SCALE GENOMIC DNA]</scope>
    <source>
        <strain>ATCC 19061 / DSM 3370 / CCUG 14189 / LMG 1036 / NCIMB 9965 / AN6</strain>
    </source>
</reference>
<name>SERC_XENNA</name>
<gene>
    <name evidence="1" type="primary">serC</name>
    <name type="ordered locus">XNC1_1562</name>
</gene>
<organism>
    <name type="scientific">Xenorhabdus nematophila (strain ATCC 19061 / DSM 3370 / CCUG 14189 / LMG 1036 / NCIMB 9965 / AN6)</name>
    <dbReference type="NCBI Taxonomy" id="406817"/>
    <lineage>
        <taxon>Bacteria</taxon>
        <taxon>Pseudomonadati</taxon>
        <taxon>Pseudomonadota</taxon>
        <taxon>Gammaproteobacteria</taxon>
        <taxon>Enterobacterales</taxon>
        <taxon>Morganellaceae</taxon>
        <taxon>Xenorhabdus</taxon>
    </lineage>
</organism>
<sequence>MNQVYNFSAGPAMLPAEVLRRAEQELCNWHGLGTSVMEISHRSKEFIAVAAEAEKDLRDLLAIPENYNVLFCHGGARGQFSALPQNLLGDKSTADYIVSGYWSECAAKEAEKYCTPNIIDIRSNTDGITSVKPMNEWALSSDAAYVHYCPNETIEGTAIFEEPDFGDDKIVIADYSSTILSAPIDVSRYGVIYAGAQKNIGPAGITVVIIREDLLGKAHKHIPSILDYTVQVKADSMYNTPPTFAWYLSGMVFKWLKEQGGLQEISKRNLAKAELLYRAIDNSNLYINRVALQNRSIMNVPFQLVNPALDGKFLEEAYAHGLHALKGHKVAGGARASIYNAMSYEGVKALVEFMADFERRNG</sequence>
<comment type="function">
    <text evidence="1">Catalyzes the reversible conversion of 3-phosphohydroxypyruvate to phosphoserine and of 3-hydroxy-2-oxo-4-phosphonooxybutanoate to phosphohydroxythreonine.</text>
</comment>
<comment type="catalytic activity">
    <reaction evidence="1">
        <text>O-phospho-L-serine + 2-oxoglutarate = 3-phosphooxypyruvate + L-glutamate</text>
        <dbReference type="Rhea" id="RHEA:14329"/>
        <dbReference type="ChEBI" id="CHEBI:16810"/>
        <dbReference type="ChEBI" id="CHEBI:18110"/>
        <dbReference type="ChEBI" id="CHEBI:29985"/>
        <dbReference type="ChEBI" id="CHEBI:57524"/>
        <dbReference type="EC" id="2.6.1.52"/>
    </reaction>
</comment>
<comment type="catalytic activity">
    <reaction evidence="1">
        <text>4-(phosphooxy)-L-threonine + 2-oxoglutarate = (R)-3-hydroxy-2-oxo-4-phosphooxybutanoate + L-glutamate</text>
        <dbReference type="Rhea" id="RHEA:16573"/>
        <dbReference type="ChEBI" id="CHEBI:16810"/>
        <dbReference type="ChEBI" id="CHEBI:29985"/>
        <dbReference type="ChEBI" id="CHEBI:58452"/>
        <dbReference type="ChEBI" id="CHEBI:58538"/>
        <dbReference type="EC" id="2.6.1.52"/>
    </reaction>
</comment>
<comment type="cofactor">
    <cofactor evidence="1">
        <name>pyridoxal 5'-phosphate</name>
        <dbReference type="ChEBI" id="CHEBI:597326"/>
    </cofactor>
    <text evidence="1">Binds 1 pyridoxal phosphate per subunit.</text>
</comment>
<comment type="pathway">
    <text evidence="1">Amino-acid biosynthesis; L-serine biosynthesis; L-serine from 3-phospho-D-glycerate: step 2/3.</text>
</comment>
<comment type="pathway">
    <text evidence="1">Cofactor biosynthesis; pyridoxine 5'-phosphate biosynthesis; pyridoxine 5'-phosphate from D-erythrose 4-phosphate: step 3/5.</text>
</comment>
<comment type="subunit">
    <text evidence="1">Homodimer.</text>
</comment>
<comment type="subcellular location">
    <subcellularLocation>
        <location evidence="1">Cytoplasm</location>
    </subcellularLocation>
</comment>
<comment type="similarity">
    <text evidence="1">Belongs to the class-V pyridoxal-phosphate-dependent aminotransferase family. SerC subfamily.</text>
</comment>
<protein>
    <recommendedName>
        <fullName evidence="1">Phosphoserine aminotransferase</fullName>
        <ecNumber evidence="1">2.6.1.52</ecNumber>
    </recommendedName>
    <alternativeName>
        <fullName evidence="1">Phosphohydroxythreonine aminotransferase</fullName>
        <shortName evidence="1">PSAT</shortName>
    </alternativeName>
</protein>
<accession>Q8RLW0</accession>
<accession>D3VBI6</accession>
<evidence type="ECO:0000255" key="1">
    <source>
        <dbReference type="HAMAP-Rule" id="MF_00160"/>
    </source>
</evidence>
<keyword id="KW-0028">Amino-acid biosynthesis</keyword>
<keyword id="KW-0032">Aminotransferase</keyword>
<keyword id="KW-0963">Cytoplasm</keyword>
<keyword id="KW-0663">Pyridoxal phosphate</keyword>
<keyword id="KW-0664">Pyridoxine biosynthesis</keyword>
<keyword id="KW-1185">Reference proteome</keyword>
<keyword id="KW-0718">Serine biosynthesis</keyword>
<keyword id="KW-0808">Transferase</keyword>
<dbReference type="EC" id="2.6.1.52" evidence="1"/>
<dbReference type="EMBL" id="AY077462">
    <property type="protein sequence ID" value="AAL79609.1"/>
    <property type="molecule type" value="Genomic_DNA"/>
</dbReference>
<dbReference type="EMBL" id="FN667742">
    <property type="protein sequence ID" value="CBJ89625.1"/>
    <property type="molecule type" value="Genomic_DNA"/>
</dbReference>
<dbReference type="RefSeq" id="WP_013183920.1">
    <property type="nucleotide sequence ID" value="NC_014228.1"/>
</dbReference>
<dbReference type="SMR" id="Q8RLW0"/>
<dbReference type="STRING" id="406817.XNC1_1562"/>
<dbReference type="GeneID" id="24903179"/>
<dbReference type="KEGG" id="xne:XNC1_1562"/>
<dbReference type="eggNOG" id="COG1932">
    <property type="taxonomic scope" value="Bacteria"/>
</dbReference>
<dbReference type="HOGENOM" id="CLU_034866_0_2_6"/>
<dbReference type="UniPathway" id="UPA00135">
    <property type="reaction ID" value="UER00197"/>
</dbReference>
<dbReference type="UniPathway" id="UPA00244">
    <property type="reaction ID" value="UER00311"/>
</dbReference>
<dbReference type="Proteomes" id="UP000008075">
    <property type="component" value="Chromosome"/>
</dbReference>
<dbReference type="GO" id="GO:0005737">
    <property type="term" value="C:cytoplasm"/>
    <property type="evidence" value="ECO:0007669"/>
    <property type="project" value="UniProtKB-SubCell"/>
</dbReference>
<dbReference type="GO" id="GO:0004648">
    <property type="term" value="F:O-phospho-L-serine:2-oxoglutarate aminotransferase activity"/>
    <property type="evidence" value="ECO:0007669"/>
    <property type="project" value="UniProtKB-UniRule"/>
</dbReference>
<dbReference type="GO" id="GO:0030170">
    <property type="term" value="F:pyridoxal phosphate binding"/>
    <property type="evidence" value="ECO:0007669"/>
    <property type="project" value="UniProtKB-UniRule"/>
</dbReference>
<dbReference type="GO" id="GO:0006564">
    <property type="term" value="P:L-serine biosynthetic process"/>
    <property type="evidence" value="ECO:0007669"/>
    <property type="project" value="UniProtKB-UniRule"/>
</dbReference>
<dbReference type="GO" id="GO:0008615">
    <property type="term" value="P:pyridoxine biosynthetic process"/>
    <property type="evidence" value="ECO:0007669"/>
    <property type="project" value="UniProtKB-UniRule"/>
</dbReference>
<dbReference type="CDD" id="cd00611">
    <property type="entry name" value="PSAT_like"/>
    <property type="match status" value="1"/>
</dbReference>
<dbReference type="FunFam" id="3.40.640.10:FF:000010">
    <property type="entry name" value="Phosphoserine aminotransferase"/>
    <property type="match status" value="1"/>
</dbReference>
<dbReference type="FunFam" id="3.90.1150.10:FF:000006">
    <property type="entry name" value="Phosphoserine aminotransferase"/>
    <property type="match status" value="1"/>
</dbReference>
<dbReference type="Gene3D" id="3.90.1150.10">
    <property type="entry name" value="Aspartate Aminotransferase, domain 1"/>
    <property type="match status" value="1"/>
</dbReference>
<dbReference type="Gene3D" id="3.40.640.10">
    <property type="entry name" value="Type I PLP-dependent aspartate aminotransferase-like (Major domain)"/>
    <property type="match status" value="1"/>
</dbReference>
<dbReference type="HAMAP" id="MF_00160">
    <property type="entry name" value="SerC_aminotrans_5"/>
    <property type="match status" value="1"/>
</dbReference>
<dbReference type="InterPro" id="IPR000192">
    <property type="entry name" value="Aminotrans_V_dom"/>
</dbReference>
<dbReference type="InterPro" id="IPR020578">
    <property type="entry name" value="Aminotrans_V_PyrdxlP_BS"/>
</dbReference>
<dbReference type="InterPro" id="IPR022278">
    <property type="entry name" value="Pser_aminoTfrase"/>
</dbReference>
<dbReference type="InterPro" id="IPR015424">
    <property type="entry name" value="PyrdxlP-dep_Trfase"/>
</dbReference>
<dbReference type="InterPro" id="IPR015421">
    <property type="entry name" value="PyrdxlP-dep_Trfase_major"/>
</dbReference>
<dbReference type="InterPro" id="IPR015422">
    <property type="entry name" value="PyrdxlP-dep_Trfase_small"/>
</dbReference>
<dbReference type="NCBIfam" id="NF003764">
    <property type="entry name" value="PRK05355.1"/>
    <property type="match status" value="1"/>
</dbReference>
<dbReference type="NCBIfam" id="TIGR01364">
    <property type="entry name" value="serC_1"/>
    <property type="match status" value="1"/>
</dbReference>
<dbReference type="PANTHER" id="PTHR43247">
    <property type="entry name" value="PHOSPHOSERINE AMINOTRANSFERASE"/>
    <property type="match status" value="1"/>
</dbReference>
<dbReference type="PANTHER" id="PTHR43247:SF1">
    <property type="entry name" value="PHOSPHOSERINE AMINOTRANSFERASE"/>
    <property type="match status" value="1"/>
</dbReference>
<dbReference type="Pfam" id="PF00266">
    <property type="entry name" value="Aminotran_5"/>
    <property type="match status" value="1"/>
</dbReference>
<dbReference type="PIRSF" id="PIRSF000525">
    <property type="entry name" value="SerC"/>
    <property type="match status" value="1"/>
</dbReference>
<dbReference type="SUPFAM" id="SSF53383">
    <property type="entry name" value="PLP-dependent transferases"/>
    <property type="match status" value="1"/>
</dbReference>
<dbReference type="PROSITE" id="PS00595">
    <property type="entry name" value="AA_TRANSFER_CLASS_5"/>
    <property type="match status" value="1"/>
</dbReference>
<proteinExistence type="inferred from homology"/>